<dbReference type="EMBL" id="CP000950">
    <property type="protein sequence ID" value="ACA66590.1"/>
    <property type="molecule type" value="Genomic_DNA"/>
</dbReference>
<dbReference type="RefSeq" id="WP_002212325.1">
    <property type="nucleotide sequence ID" value="NZ_CP009792.1"/>
</dbReference>
<dbReference type="SMR" id="B1JIV5"/>
<dbReference type="GeneID" id="96663201"/>
<dbReference type="KEGG" id="ypy:YPK_0277"/>
<dbReference type="PATRIC" id="fig|502800.11.peg.883"/>
<dbReference type="GO" id="GO:0005737">
    <property type="term" value="C:cytoplasm"/>
    <property type="evidence" value="ECO:0007669"/>
    <property type="project" value="UniProtKB-SubCell"/>
</dbReference>
<dbReference type="GO" id="GO:0005525">
    <property type="term" value="F:GTP binding"/>
    <property type="evidence" value="ECO:0007669"/>
    <property type="project" value="UniProtKB-UniRule"/>
</dbReference>
<dbReference type="GO" id="GO:0003924">
    <property type="term" value="F:GTPase activity"/>
    <property type="evidence" value="ECO:0007669"/>
    <property type="project" value="InterPro"/>
</dbReference>
<dbReference type="GO" id="GO:0097216">
    <property type="term" value="F:guanosine tetraphosphate binding"/>
    <property type="evidence" value="ECO:0007669"/>
    <property type="project" value="UniProtKB-ARBA"/>
</dbReference>
<dbReference type="GO" id="GO:0003746">
    <property type="term" value="F:translation elongation factor activity"/>
    <property type="evidence" value="ECO:0007669"/>
    <property type="project" value="UniProtKB-UniRule"/>
</dbReference>
<dbReference type="GO" id="GO:0032790">
    <property type="term" value="P:ribosome disassembly"/>
    <property type="evidence" value="ECO:0007669"/>
    <property type="project" value="TreeGrafter"/>
</dbReference>
<dbReference type="CDD" id="cd01886">
    <property type="entry name" value="EF-G"/>
    <property type="match status" value="1"/>
</dbReference>
<dbReference type="CDD" id="cd16262">
    <property type="entry name" value="EFG_III"/>
    <property type="match status" value="1"/>
</dbReference>
<dbReference type="CDD" id="cd01434">
    <property type="entry name" value="EFG_mtEFG1_IV"/>
    <property type="match status" value="1"/>
</dbReference>
<dbReference type="CDD" id="cd03713">
    <property type="entry name" value="EFG_mtEFG_C"/>
    <property type="match status" value="1"/>
</dbReference>
<dbReference type="CDD" id="cd04088">
    <property type="entry name" value="EFG_mtEFG_II"/>
    <property type="match status" value="1"/>
</dbReference>
<dbReference type="FunFam" id="2.40.30.10:FF:000006">
    <property type="entry name" value="Elongation factor G"/>
    <property type="match status" value="1"/>
</dbReference>
<dbReference type="FunFam" id="3.30.230.10:FF:000003">
    <property type="entry name" value="Elongation factor G"/>
    <property type="match status" value="1"/>
</dbReference>
<dbReference type="FunFam" id="3.30.70.240:FF:000001">
    <property type="entry name" value="Elongation factor G"/>
    <property type="match status" value="1"/>
</dbReference>
<dbReference type="FunFam" id="3.30.70.870:FF:000001">
    <property type="entry name" value="Elongation factor G"/>
    <property type="match status" value="1"/>
</dbReference>
<dbReference type="FunFam" id="3.40.50.300:FF:000029">
    <property type="entry name" value="Elongation factor G"/>
    <property type="match status" value="1"/>
</dbReference>
<dbReference type="Gene3D" id="3.30.230.10">
    <property type="match status" value="1"/>
</dbReference>
<dbReference type="Gene3D" id="3.30.70.240">
    <property type="match status" value="1"/>
</dbReference>
<dbReference type="Gene3D" id="3.30.70.870">
    <property type="entry name" value="Elongation Factor G (Translational Gtpase), domain 3"/>
    <property type="match status" value="1"/>
</dbReference>
<dbReference type="Gene3D" id="3.40.50.300">
    <property type="entry name" value="P-loop containing nucleotide triphosphate hydrolases"/>
    <property type="match status" value="1"/>
</dbReference>
<dbReference type="Gene3D" id="2.40.30.10">
    <property type="entry name" value="Translation factors"/>
    <property type="match status" value="1"/>
</dbReference>
<dbReference type="HAMAP" id="MF_00054_B">
    <property type="entry name" value="EF_G_EF_2_B"/>
    <property type="match status" value="1"/>
</dbReference>
<dbReference type="InterPro" id="IPR041095">
    <property type="entry name" value="EFG_II"/>
</dbReference>
<dbReference type="InterPro" id="IPR009022">
    <property type="entry name" value="EFG_III"/>
</dbReference>
<dbReference type="InterPro" id="IPR035647">
    <property type="entry name" value="EFG_III/V"/>
</dbReference>
<dbReference type="InterPro" id="IPR047872">
    <property type="entry name" value="EFG_IV"/>
</dbReference>
<dbReference type="InterPro" id="IPR035649">
    <property type="entry name" value="EFG_V"/>
</dbReference>
<dbReference type="InterPro" id="IPR000640">
    <property type="entry name" value="EFG_V-like"/>
</dbReference>
<dbReference type="InterPro" id="IPR004161">
    <property type="entry name" value="EFTu-like_2"/>
</dbReference>
<dbReference type="InterPro" id="IPR031157">
    <property type="entry name" value="G_TR_CS"/>
</dbReference>
<dbReference type="InterPro" id="IPR027417">
    <property type="entry name" value="P-loop_NTPase"/>
</dbReference>
<dbReference type="InterPro" id="IPR020568">
    <property type="entry name" value="Ribosomal_Su5_D2-typ_SF"/>
</dbReference>
<dbReference type="InterPro" id="IPR014721">
    <property type="entry name" value="Ribsml_uS5_D2-typ_fold_subgr"/>
</dbReference>
<dbReference type="InterPro" id="IPR005225">
    <property type="entry name" value="Small_GTP-bd"/>
</dbReference>
<dbReference type="InterPro" id="IPR000795">
    <property type="entry name" value="T_Tr_GTP-bd_dom"/>
</dbReference>
<dbReference type="InterPro" id="IPR009000">
    <property type="entry name" value="Transl_B-barrel_sf"/>
</dbReference>
<dbReference type="InterPro" id="IPR004540">
    <property type="entry name" value="Transl_elong_EFG/EF2"/>
</dbReference>
<dbReference type="InterPro" id="IPR005517">
    <property type="entry name" value="Transl_elong_EFG/EF2_IV"/>
</dbReference>
<dbReference type="NCBIfam" id="TIGR00484">
    <property type="entry name" value="EF-G"/>
    <property type="match status" value="1"/>
</dbReference>
<dbReference type="NCBIfam" id="NF009381">
    <property type="entry name" value="PRK12740.1-5"/>
    <property type="match status" value="1"/>
</dbReference>
<dbReference type="NCBIfam" id="TIGR00231">
    <property type="entry name" value="small_GTP"/>
    <property type="match status" value="1"/>
</dbReference>
<dbReference type="PANTHER" id="PTHR43261:SF1">
    <property type="entry name" value="RIBOSOME-RELEASING FACTOR 2, MITOCHONDRIAL"/>
    <property type="match status" value="1"/>
</dbReference>
<dbReference type="PANTHER" id="PTHR43261">
    <property type="entry name" value="TRANSLATION ELONGATION FACTOR G-RELATED"/>
    <property type="match status" value="1"/>
</dbReference>
<dbReference type="Pfam" id="PF00679">
    <property type="entry name" value="EFG_C"/>
    <property type="match status" value="1"/>
</dbReference>
<dbReference type="Pfam" id="PF14492">
    <property type="entry name" value="EFG_III"/>
    <property type="match status" value="1"/>
</dbReference>
<dbReference type="Pfam" id="PF03764">
    <property type="entry name" value="EFG_IV"/>
    <property type="match status" value="1"/>
</dbReference>
<dbReference type="Pfam" id="PF00009">
    <property type="entry name" value="GTP_EFTU"/>
    <property type="match status" value="1"/>
</dbReference>
<dbReference type="Pfam" id="PF03144">
    <property type="entry name" value="GTP_EFTU_D2"/>
    <property type="match status" value="1"/>
</dbReference>
<dbReference type="PRINTS" id="PR00315">
    <property type="entry name" value="ELONGATNFCT"/>
</dbReference>
<dbReference type="SMART" id="SM00838">
    <property type="entry name" value="EFG_C"/>
    <property type="match status" value="1"/>
</dbReference>
<dbReference type="SMART" id="SM00889">
    <property type="entry name" value="EFG_IV"/>
    <property type="match status" value="1"/>
</dbReference>
<dbReference type="SUPFAM" id="SSF54980">
    <property type="entry name" value="EF-G C-terminal domain-like"/>
    <property type="match status" value="2"/>
</dbReference>
<dbReference type="SUPFAM" id="SSF52540">
    <property type="entry name" value="P-loop containing nucleoside triphosphate hydrolases"/>
    <property type="match status" value="1"/>
</dbReference>
<dbReference type="SUPFAM" id="SSF54211">
    <property type="entry name" value="Ribosomal protein S5 domain 2-like"/>
    <property type="match status" value="1"/>
</dbReference>
<dbReference type="SUPFAM" id="SSF50447">
    <property type="entry name" value="Translation proteins"/>
    <property type="match status" value="1"/>
</dbReference>
<dbReference type="PROSITE" id="PS00301">
    <property type="entry name" value="G_TR_1"/>
    <property type="match status" value="1"/>
</dbReference>
<dbReference type="PROSITE" id="PS51722">
    <property type="entry name" value="G_TR_2"/>
    <property type="match status" value="1"/>
</dbReference>
<comment type="function">
    <text evidence="1">Catalyzes the GTP-dependent ribosomal translocation step during translation elongation. During this step, the ribosome changes from the pre-translocational (PRE) to the post-translocational (POST) state as the newly formed A-site-bound peptidyl-tRNA and P-site-bound deacylated tRNA move to the P and E sites, respectively. Catalyzes the coordinated movement of the two tRNA molecules, the mRNA and conformational changes in the ribosome.</text>
</comment>
<comment type="subcellular location">
    <subcellularLocation>
        <location evidence="1">Cytoplasm</location>
    </subcellularLocation>
</comment>
<comment type="similarity">
    <text evidence="1">Belongs to the TRAFAC class translation factor GTPase superfamily. Classic translation factor GTPase family. EF-G/EF-2 subfamily.</text>
</comment>
<gene>
    <name evidence="1" type="primary">fusA</name>
    <name type="ordered locus">YPK_0277</name>
</gene>
<sequence length="702" mass="77537">MARKTPIERYRNIGISAHIDAGKTTTTERILFYTGVNHKIGEVHDGAATMDWMEQEQERGITITSAATTCFWSGMAKQFEPHHVNIIDTPGHVDFTIEVERSMRVLDGAVMVYCAVGGVQPQSETVWRQANKYKVPRIAFVNKMDRMGANFLRVVGQLKSRLGANPVPLQLAIGAEEKFTGIIDLVKMKAINWNEADQGVTFEYEEIPADMAELAAEWHQNLVESAAEASDELMDKYLGGEELTEEEIKKALRQRVLKSEIILVTCGSAFKNKGVQAMLDAVIEYLPAPTDVESINGILDDGKDTPAVRHSDDKEPFSALAFKIATDPFVGNLTFFRVYSGIVNSGDTVLNSVKSQRERLGRIVQMHANKREEIKEVHAGDIAAAIGLKDVTTGDTLCDPNNPIILERMEFPEPVISVAVEPKTKADQEKMGMALGRLAKEDPSFRVWTDEESGQTIIAGMGELHLDILVDRMRREFNVEANVGKPQVAYRETIRETVKDVEGKHAKQSGGRGQYGHVVIDMSPLPPGGVGYEFVNEIVGGSIPKEFIPAVDKGIQEQLKSGPLAGYPVVDVKVRLHYGSYHDVDSSELAFKLAGSIAFKEGFKRAKPVLLEPIMKVEVETPEDYMGDVMGDLNRRRGIIEGMEDTATGKTVRVKVPLSEMFGYATDLRSQTQGRASYSMEFLEYAEAPSNVAKAVIEARGK</sequence>
<protein>
    <recommendedName>
        <fullName evidence="1">Elongation factor G</fullName>
        <shortName evidence="1">EF-G</shortName>
    </recommendedName>
</protein>
<name>EFG_YERPY</name>
<feature type="chain" id="PRO_1000091786" description="Elongation factor G">
    <location>
        <begin position="1"/>
        <end position="702"/>
    </location>
</feature>
<feature type="domain" description="tr-type G">
    <location>
        <begin position="8"/>
        <end position="290"/>
    </location>
</feature>
<feature type="binding site" evidence="1">
    <location>
        <begin position="17"/>
        <end position="24"/>
    </location>
    <ligand>
        <name>GTP</name>
        <dbReference type="ChEBI" id="CHEBI:37565"/>
    </ligand>
</feature>
<feature type="binding site" evidence="1">
    <location>
        <begin position="88"/>
        <end position="92"/>
    </location>
    <ligand>
        <name>GTP</name>
        <dbReference type="ChEBI" id="CHEBI:37565"/>
    </ligand>
</feature>
<feature type="binding site" evidence="1">
    <location>
        <begin position="142"/>
        <end position="145"/>
    </location>
    <ligand>
        <name>GTP</name>
        <dbReference type="ChEBI" id="CHEBI:37565"/>
    </ligand>
</feature>
<reference key="1">
    <citation type="submission" date="2008-02" db="EMBL/GenBank/DDBJ databases">
        <title>Complete sequence of Yersinia pseudotuberculosis YPIII.</title>
        <authorList>
            <consortium name="US DOE Joint Genome Institute"/>
            <person name="Copeland A."/>
            <person name="Lucas S."/>
            <person name="Lapidus A."/>
            <person name="Glavina del Rio T."/>
            <person name="Dalin E."/>
            <person name="Tice H."/>
            <person name="Bruce D."/>
            <person name="Goodwin L."/>
            <person name="Pitluck S."/>
            <person name="Munk A.C."/>
            <person name="Brettin T."/>
            <person name="Detter J.C."/>
            <person name="Han C."/>
            <person name="Tapia R."/>
            <person name="Schmutz J."/>
            <person name="Larimer F."/>
            <person name="Land M."/>
            <person name="Hauser L."/>
            <person name="Challacombe J.F."/>
            <person name="Green L."/>
            <person name="Lindler L.E."/>
            <person name="Nikolich M.P."/>
            <person name="Richardson P."/>
        </authorList>
    </citation>
    <scope>NUCLEOTIDE SEQUENCE [LARGE SCALE GENOMIC DNA]</scope>
    <source>
        <strain>YPIII</strain>
    </source>
</reference>
<proteinExistence type="inferred from homology"/>
<evidence type="ECO:0000255" key="1">
    <source>
        <dbReference type="HAMAP-Rule" id="MF_00054"/>
    </source>
</evidence>
<accession>B1JIV5</accession>
<keyword id="KW-0963">Cytoplasm</keyword>
<keyword id="KW-0251">Elongation factor</keyword>
<keyword id="KW-0342">GTP-binding</keyword>
<keyword id="KW-0547">Nucleotide-binding</keyword>
<keyword id="KW-0648">Protein biosynthesis</keyword>
<organism>
    <name type="scientific">Yersinia pseudotuberculosis serotype O:3 (strain YPIII)</name>
    <dbReference type="NCBI Taxonomy" id="502800"/>
    <lineage>
        <taxon>Bacteria</taxon>
        <taxon>Pseudomonadati</taxon>
        <taxon>Pseudomonadota</taxon>
        <taxon>Gammaproteobacteria</taxon>
        <taxon>Enterobacterales</taxon>
        <taxon>Yersiniaceae</taxon>
        <taxon>Yersinia</taxon>
    </lineage>
</organism>